<organism>
    <name type="scientific">Salmonella gallinarum (strain 287/91 / NCTC 13346)</name>
    <dbReference type="NCBI Taxonomy" id="550538"/>
    <lineage>
        <taxon>Bacteria</taxon>
        <taxon>Pseudomonadati</taxon>
        <taxon>Pseudomonadota</taxon>
        <taxon>Gammaproteobacteria</taxon>
        <taxon>Enterobacterales</taxon>
        <taxon>Enterobacteriaceae</taxon>
        <taxon>Salmonella</taxon>
    </lineage>
</organism>
<feature type="chain" id="PRO_1000092314" description="N-acetylmuramic acid 6-phosphate etherase">
    <location>
        <begin position="1"/>
        <end position="297"/>
    </location>
</feature>
<feature type="domain" description="SIS" evidence="1">
    <location>
        <begin position="55"/>
        <end position="218"/>
    </location>
</feature>
<feature type="active site" description="Proton donor" evidence="1">
    <location>
        <position position="83"/>
    </location>
</feature>
<feature type="active site" evidence="1">
    <location>
        <position position="114"/>
    </location>
</feature>
<accession>B5RD39</accession>
<name>MURQ_SALG2</name>
<sequence length="297" mass="30976">MNLGTLVSETRNPQTMDLDALPTPELVKRFNEQDTRVAEAVKATLPDVARAVDAAVAALKSGGRIIYMGAGTSGRLGVLDASECPPTFGVPHGLVVGLIAGGPGALLKAVEGAEDSQQAGEDDLVALNLQEQDLVVGLAASGRTPYVIGGLRYARQSGCTTVAVSCNPDSPIAREANIAISPVVGPEALTGSTRLKSGTAQKMVLNMISTGAMVKFGKVYQNLMVDMKATNVKLVDRACRMVVEATGIGREEAETLLKQTDFEVKPAILMALTGLDAAAAREKLAAHQGFLRAALEH</sequence>
<proteinExistence type="inferred from homology"/>
<dbReference type="EC" id="4.2.1.126" evidence="1"/>
<dbReference type="EMBL" id="AM933173">
    <property type="protein sequence ID" value="CAR38425.1"/>
    <property type="molecule type" value="Genomic_DNA"/>
</dbReference>
<dbReference type="RefSeq" id="WP_001048537.1">
    <property type="nucleotide sequence ID" value="NC_011274.1"/>
</dbReference>
<dbReference type="SMR" id="B5RD39"/>
<dbReference type="KEGG" id="seg:SG2608"/>
<dbReference type="HOGENOM" id="CLU_049049_1_1_6"/>
<dbReference type="UniPathway" id="UPA00342"/>
<dbReference type="UniPathway" id="UPA00343"/>
<dbReference type="UniPathway" id="UPA00544"/>
<dbReference type="Proteomes" id="UP000008321">
    <property type="component" value="Chromosome"/>
</dbReference>
<dbReference type="GO" id="GO:0097367">
    <property type="term" value="F:carbohydrate derivative binding"/>
    <property type="evidence" value="ECO:0007669"/>
    <property type="project" value="InterPro"/>
</dbReference>
<dbReference type="GO" id="GO:0016835">
    <property type="term" value="F:carbon-oxygen lyase activity"/>
    <property type="evidence" value="ECO:0007669"/>
    <property type="project" value="UniProtKB-UniRule"/>
</dbReference>
<dbReference type="GO" id="GO:0016803">
    <property type="term" value="F:ether hydrolase activity"/>
    <property type="evidence" value="ECO:0007669"/>
    <property type="project" value="TreeGrafter"/>
</dbReference>
<dbReference type="GO" id="GO:0097175">
    <property type="term" value="P:1,6-anhydro-N-acetyl-beta-muramic acid catabolic process"/>
    <property type="evidence" value="ECO:0007669"/>
    <property type="project" value="UniProtKB-UniRule"/>
</dbReference>
<dbReference type="GO" id="GO:0046348">
    <property type="term" value="P:amino sugar catabolic process"/>
    <property type="evidence" value="ECO:0007669"/>
    <property type="project" value="InterPro"/>
</dbReference>
<dbReference type="GO" id="GO:0097173">
    <property type="term" value="P:N-acetylmuramic acid catabolic process"/>
    <property type="evidence" value="ECO:0007669"/>
    <property type="project" value="UniProtKB-UniPathway"/>
</dbReference>
<dbReference type="GO" id="GO:0009254">
    <property type="term" value="P:peptidoglycan turnover"/>
    <property type="evidence" value="ECO:0007669"/>
    <property type="project" value="UniProtKB-UniRule"/>
</dbReference>
<dbReference type="CDD" id="cd05007">
    <property type="entry name" value="SIS_Etherase"/>
    <property type="match status" value="1"/>
</dbReference>
<dbReference type="FunFam" id="1.10.8.1080:FF:000001">
    <property type="entry name" value="N-acetylmuramic acid 6-phosphate etherase"/>
    <property type="match status" value="1"/>
</dbReference>
<dbReference type="FunFam" id="3.40.50.10490:FF:000014">
    <property type="entry name" value="N-acetylmuramic acid 6-phosphate etherase"/>
    <property type="match status" value="1"/>
</dbReference>
<dbReference type="Gene3D" id="1.10.8.1080">
    <property type="match status" value="1"/>
</dbReference>
<dbReference type="Gene3D" id="3.40.50.10490">
    <property type="entry name" value="Glucose-6-phosphate isomerase like protein, domain 1"/>
    <property type="match status" value="1"/>
</dbReference>
<dbReference type="HAMAP" id="MF_00068">
    <property type="entry name" value="MurQ"/>
    <property type="match status" value="1"/>
</dbReference>
<dbReference type="InterPro" id="IPR005488">
    <property type="entry name" value="Etherase_MurQ"/>
</dbReference>
<dbReference type="InterPro" id="IPR005486">
    <property type="entry name" value="Glucokinase_regulatory_CS"/>
</dbReference>
<dbReference type="InterPro" id="IPR040190">
    <property type="entry name" value="MURQ/GCKR"/>
</dbReference>
<dbReference type="InterPro" id="IPR001347">
    <property type="entry name" value="SIS_dom"/>
</dbReference>
<dbReference type="InterPro" id="IPR046348">
    <property type="entry name" value="SIS_dom_sf"/>
</dbReference>
<dbReference type="NCBIfam" id="TIGR00274">
    <property type="entry name" value="N-acetylmuramic acid 6-phosphate etherase"/>
    <property type="match status" value="1"/>
</dbReference>
<dbReference type="NCBIfam" id="NF003915">
    <property type="entry name" value="PRK05441.1"/>
    <property type="match status" value="1"/>
</dbReference>
<dbReference type="NCBIfam" id="NF009222">
    <property type="entry name" value="PRK12570.1"/>
    <property type="match status" value="1"/>
</dbReference>
<dbReference type="PANTHER" id="PTHR10088">
    <property type="entry name" value="GLUCOKINASE REGULATORY PROTEIN"/>
    <property type="match status" value="1"/>
</dbReference>
<dbReference type="PANTHER" id="PTHR10088:SF5">
    <property type="entry name" value="N-ACETYLMURAMIC ACID 6-PHOSPHATE ETHERASE"/>
    <property type="match status" value="1"/>
</dbReference>
<dbReference type="Pfam" id="PF22645">
    <property type="entry name" value="GKRP_SIS_N"/>
    <property type="match status" value="1"/>
</dbReference>
<dbReference type="SUPFAM" id="SSF53697">
    <property type="entry name" value="SIS domain"/>
    <property type="match status" value="1"/>
</dbReference>
<dbReference type="PROSITE" id="PS01272">
    <property type="entry name" value="GCKR"/>
    <property type="match status" value="1"/>
</dbReference>
<dbReference type="PROSITE" id="PS51464">
    <property type="entry name" value="SIS"/>
    <property type="match status" value="1"/>
</dbReference>
<keyword id="KW-0119">Carbohydrate metabolism</keyword>
<keyword id="KW-0456">Lyase</keyword>
<evidence type="ECO:0000255" key="1">
    <source>
        <dbReference type="HAMAP-Rule" id="MF_00068"/>
    </source>
</evidence>
<protein>
    <recommendedName>
        <fullName evidence="1">N-acetylmuramic acid 6-phosphate etherase</fullName>
        <shortName evidence="1">MurNAc-6-P etherase</shortName>
        <ecNumber evidence="1">4.2.1.126</ecNumber>
    </recommendedName>
    <alternativeName>
        <fullName evidence="1">N-acetylmuramic acid 6-phosphate hydrolase</fullName>
    </alternativeName>
    <alternativeName>
        <fullName evidence="1">N-acetylmuramic acid 6-phosphate lyase</fullName>
    </alternativeName>
</protein>
<reference key="1">
    <citation type="journal article" date="2008" name="Genome Res.">
        <title>Comparative genome analysis of Salmonella enteritidis PT4 and Salmonella gallinarum 287/91 provides insights into evolutionary and host adaptation pathways.</title>
        <authorList>
            <person name="Thomson N.R."/>
            <person name="Clayton D.J."/>
            <person name="Windhorst D."/>
            <person name="Vernikos G."/>
            <person name="Davidson S."/>
            <person name="Churcher C."/>
            <person name="Quail M.A."/>
            <person name="Stevens M."/>
            <person name="Jones M.A."/>
            <person name="Watson M."/>
            <person name="Barron A."/>
            <person name="Layton A."/>
            <person name="Pickard D."/>
            <person name="Kingsley R.A."/>
            <person name="Bignell A."/>
            <person name="Clark L."/>
            <person name="Harris B."/>
            <person name="Ormond D."/>
            <person name="Abdellah Z."/>
            <person name="Brooks K."/>
            <person name="Cherevach I."/>
            <person name="Chillingworth T."/>
            <person name="Woodward J."/>
            <person name="Norberczak H."/>
            <person name="Lord A."/>
            <person name="Arrowsmith C."/>
            <person name="Jagels K."/>
            <person name="Moule S."/>
            <person name="Mungall K."/>
            <person name="Saunders M."/>
            <person name="Whitehead S."/>
            <person name="Chabalgoity J.A."/>
            <person name="Maskell D."/>
            <person name="Humphreys T."/>
            <person name="Roberts M."/>
            <person name="Barrow P.A."/>
            <person name="Dougan G."/>
            <person name="Parkhill J."/>
        </authorList>
    </citation>
    <scope>NUCLEOTIDE SEQUENCE [LARGE SCALE GENOMIC DNA]</scope>
    <source>
        <strain>287/91 / NCTC 13346</strain>
    </source>
</reference>
<gene>
    <name evidence="1" type="primary">murQ</name>
    <name type="ordered locus">SG2608</name>
</gene>
<comment type="function">
    <text evidence="1">Specifically catalyzes the cleavage of the D-lactyl ether substituent of MurNAc 6-phosphate, producing GlcNAc 6-phosphate and D-lactate. Together with AnmK, is also required for the utilization of anhydro-N-acetylmuramic acid (anhMurNAc) either imported from the medium or derived from its own cell wall murein, and thus plays a role in cell wall recycling.</text>
</comment>
<comment type="catalytic activity">
    <reaction evidence="1">
        <text>N-acetyl-D-muramate 6-phosphate + H2O = N-acetyl-D-glucosamine 6-phosphate + (R)-lactate</text>
        <dbReference type="Rhea" id="RHEA:26410"/>
        <dbReference type="ChEBI" id="CHEBI:15377"/>
        <dbReference type="ChEBI" id="CHEBI:16004"/>
        <dbReference type="ChEBI" id="CHEBI:57513"/>
        <dbReference type="ChEBI" id="CHEBI:58722"/>
        <dbReference type="EC" id="4.2.1.126"/>
    </reaction>
</comment>
<comment type="pathway">
    <text evidence="1">Amino-sugar metabolism; 1,6-anhydro-N-acetylmuramate degradation.</text>
</comment>
<comment type="pathway">
    <text evidence="1">Amino-sugar metabolism; N-acetylmuramate degradation.</text>
</comment>
<comment type="pathway">
    <text evidence="1">Cell wall biogenesis; peptidoglycan recycling.</text>
</comment>
<comment type="subunit">
    <text evidence="1">Homodimer.</text>
</comment>
<comment type="induction">
    <text evidence="1">Induced by MurNAc 6-phosphate that releases the repressor MurR from the DNA. Repressed by MurR in the absence of MurNAc 6-phosphate.</text>
</comment>
<comment type="miscellaneous">
    <text evidence="1">A lyase-type mechanism (elimination/hydration) is suggested for the cleavage of the lactyl ether bond of MurNAc 6-phosphate, with the formation of an alpha,beta-unsaturated aldehyde intermediate with (E)-stereochemistry, followed by the syn addition of water to give product.</text>
</comment>
<comment type="similarity">
    <text evidence="1">Belongs to the GCKR-like family. MurNAc-6-P etherase subfamily.</text>
</comment>